<accession>Q03T07</accession>
<evidence type="ECO:0000255" key="1">
    <source>
        <dbReference type="HAMAP-Rule" id="MF_00101"/>
    </source>
</evidence>
<protein>
    <recommendedName>
        <fullName evidence="1">Holo-[acyl-carrier-protein] synthase</fullName>
        <shortName evidence="1">Holo-ACP synthase</shortName>
        <ecNumber evidence="1">2.7.8.7</ecNumber>
    </recommendedName>
    <alternativeName>
        <fullName evidence="1">4'-phosphopantetheinyl transferase AcpS</fullName>
    </alternativeName>
</protein>
<organism>
    <name type="scientific">Levilactobacillus brevis (strain ATCC 367 / BCRC 12310 / CIP 105137 / JCM 1170 / LMG 11437 / NCIMB 947 / NCTC 947)</name>
    <name type="common">Lactobacillus brevis</name>
    <dbReference type="NCBI Taxonomy" id="387344"/>
    <lineage>
        <taxon>Bacteria</taxon>
        <taxon>Bacillati</taxon>
        <taxon>Bacillota</taxon>
        <taxon>Bacilli</taxon>
        <taxon>Lactobacillales</taxon>
        <taxon>Lactobacillaceae</taxon>
        <taxon>Levilactobacillus</taxon>
    </lineage>
</organism>
<keyword id="KW-0963">Cytoplasm</keyword>
<keyword id="KW-0275">Fatty acid biosynthesis</keyword>
<keyword id="KW-0276">Fatty acid metabolism</keyword>
<keyword id="KW-0444">Lipid biosynthesis</keyword>
<keyword id="KW-0443">Lipid metabolism</keyword>
<keyword id="KW-0460">Magnesium</keyword>
<keyword id="KW-0479">Metal-binding</keyword>
<keyword id="KW-1185">Reference proteome</keyword>
<keyword id="KW-0808">Transferase</keyword>
<dbReference type="EC" id="2.7.8.7" evidence="1"/>
<dbReference type="EMBL" id="CP000416">
    <property type="protein sequence ID" value="ABJ63665.1"/>
    <property type="molecule type" value="Genomic_DNA"/>
</dbReference>
<dbReference type="RefSeq" id="WP_011667291.1">
    <property type="nucleotide sequence ID" value="NC_008497.1"/>
</dbReference>
<dbReference type="SMR" id="Q03T07"/>
<dbReference type="STRING" id="387344.LVIS_0507"/>
<dbReference type="GeneID" id="56992326"/>
<dbReference type="KEGG" id="lbr:LVIS_0507"/>
<dbReference type="eggNOG" id="COG0736">
    <property type="taxonomic scope" value="Bacteria"/>
</dbReference>
<dbReference type="HOGENOM" id="CLU_089696_1_2_9"/>
<dbReference type="Proteomes" id="UP000001652">
    <property type="component" value="Chromosome"/>
</dbReference>
<dbReference type="GO" id="GO:0005737">
    <property type="term" value="C:cytoplasm"/>
    <property type="evidence" value="ECO:0007669"/>
    <property type="project" value="UniProtKB-SubCell"/>
</dbReference>
<dbReference type="GO" id="GO:0008897">
    <property type="term" value="F:holo-[acyl-carrier-protein] synthase activity"/>
    <property type="evidence" value="ECO:0007669"/>
    <property type="project" value="UniProtKB-UniRule"/>
</dbReference>
<dbReference type="GO" id="GO:0000287">
    <property type="term" value="F:magnesium ion binding"/>
    <property type="evidence" value="ECO:0007669"/>
    <property type="project" value="UniProtKB-UniRule"/>
</dbReference>
<dbReference type="GO" id="GO:0006633">
    <property type="term" value="P:fatty acid biosynthetic process"/>
    <property type="evidence" value="ECO:0007669"/>
    <property type="project" value="UniProtKB-UniRule"/>
</dbReference>
<dbReference type="Gene3D" id="3.90.470.20">
    <property type="entry name" value="4'-phosphopantetheinyl transferase domain"/>
    <property type="match status" value="1"/>
</dbReference>
<dbReference type="HAMAP" id="MF_00101">
    <property type="entry name" value="AcpS"/>
    <property type="match status" value="1"/>
</dbReference>
<dbReference type="InterPro" id="IPR008278">
    <property type="entry name" value="4-PPantetheinyl_Trfase_dom"/>
</dbReference>
<dbReference type="InterPro" id="IPR037143">
    <property type="entry name" value="4-PPantetheinyl_Trfase_dom_sf"/>
</dbReference>
<dbReference type="InterPro" id="IPR002582">
    <property type="entry name" value="ACPS"/>
</dbReference>
<dbReference type="InterPro" id="IPR004568">
    <property type="entry name" value="Ppantetheine-prot_Trfase_dom"/>
</dbReference>
<dbReference type="NCBIfam" id="TIGR00516">
    <property type="entry name" value="acpS"/>
    <property type="match status" value="1"/>
</dbReference>
<dbReference type="NCBIfam" id="TIGR00556">
    <property type="entry name" value="pantethn_trn"/>
    <property type="match status" value="1"/>
</dbReference>
<dbReference type="Pfam" id="PF01648">
    <property type="entry name" value="ACPS"/>
    <property type="match status" value="1"/>
</dbReference>
<dbReference type="SUPFAM" id="SSF56214">
    <property type="entry name" value="4'-phosphopantetheinyl transferase"/>
    <property type="match status" value="1"/>
</dbReference>
<proteinExistence type="inferred from homology"/>
<sequence length="122" mass="13749">MIYGTGIDITDLKRVQRVVERQPRFLTKVLTPNERVDYQKLSGQRALEFIAGRWSAKESYSKAMGTGIGATVTFQDIEIRDNDAGRPVVRRQPFGGIAHVSISHTETVVMTQVILERGNESW</sequence>
<reference key="1">
    <citation type="journal article" date="2006" name="Proc. Natl. Acad. Sci. U.S.A.">
        <title>Comparative genomics of the lactic acid bacteria.</title>
        <authorList>
            <person name="Makarova K.S."/>
            <person name="Slesarev A."/>
            <person name="Wolf Y.I."/>
            <person name="Sorokin A."/>
            <person name="Mirkin B."/>
            <person name="Koonin E.V."/>
            <person name="Pavlov A."/>
            <person name="Pavlova N."/>
            <person name="Karamychev V."/>
            <person name="Polouchine N."/>
            <person name="Shakhova V."/>
            <person name="Grigoriev I."/>
            <person name="Lou Y."/>
            <person name="Rohksar D."/>
            <person name="Lucas S."/>
            <person name="Huang K."/>
            <person name="Goodstein D.M."/>
            <person name="Hawkins T."/>
            <person name="Plengvidhya V."/>
            <person name="Welker D."/>
            <person name="Hughes J."/>
            <person name="Goh Y."/>
            <person name="Benson A."/>
            <person name="Baldwin K."/>
            <person name="Lee J.-H."/>
            <person name="Diaz-Muniz I."/>
            <person name="Dosti B."/>
            <person name="Smeianov V."/>
            <person name="Wechter W."/>
            <person name="Barabote R."/>
            <person name="Lorca G."/>
            <person name="Altermann E."/>
            <person name="Barrangou R."/>
            <person name="Ganesan B."/>
            <person name="Xie Y."/>
            <person name="Rawsthorne H."/>
            <person name="Tamir D."/>
            <person name="Parker C."/>
            <person name="Breidt F."/>
            <person name="Broadbent J.R."/>
            <person name="Hutkins R."/>
            <person name="O'Sullivan D."/>
            <person name="Steele J."/>
            <person name="Unlu G."/>
            <person name="Saier M.H. Jr."/>
            <person name="Klaenhammer T."/>
            <person name="Richardson P."/>
            <person name="Kozyavkin S."/>
            <person name="Weimer B.C."/>
            <person name="Mills D.A."/>
        </authorList>
    </citation>
    <scope>NUCLEOTIDE SEQUENCE [LARGE SCALE GENOMIC DNA]</scope>
    <source>
        <strain>ATCC 367 / BCRC 12310 / CIP 105137 / JCM 1170 / LMG 11437 / NCIMB 947 / NCTC 947</strain>
    </source>
</reference>
<gene>
    <name evidence="1" type="primary">acpS</name>
    <name type="ordered locus">LVIS_0507</name>
</gene>
<name>ACPS_LEVBA</name>
<comment type="function">
    <text evidence="1">Transfers the 4'-phosphopantetheine moiety from coenzyme A to a Ser of acyl-carrier-protein.</text>
</comment>
<comment type="catalytic activity">
    <reaction evidence="1">
        <text>apo-[ACP] + CoA = holo-[ACP] + adenosine 3',5'-bisphosphate + H(+)</text>
        <dbReference type="Rhea" id="RHEA:12068"/>
        <dbReference type="Rhea" id="RHEA-COMP:9685"/>
        <dbReference type="Rhea" id="RHEA-COMP:9690"/>
        <dbReference type="ChEBI" id="CHEBI:15378"/>
        <dbReference type="ChEBI" id="CHEBI:29999"/>
        <dbReference type="ChEBI" id="CHEBI:57287"/>
        <dbReference type="ChEBI" id="CHEBI:58343"/>
        <dbReference type="ChEBI" id="CHEBI:64479"/>
        <dbReference type="EC" id="2.7.8.7"/>
    </reaction>
</comment>
<comment type="cofactor">
    <cofactor evidence="1">
        <name>Mg(2+)</name>
        <dbReference type="ChEBI" id="CHEBI:18420"/>
    </cofactor>
</comment>
<comment type="subcellular location">
    <subcellularLocation>
        <location evidence="1">Cytoplasm</location>
    </subcellularLocation>
</comment>
<comment type="similarity">
    <text evidence="1">Belongs to the P-Pant transferase superfamily. AcpS family.</text>
</comment>
<feature type="chain" id="PRO_1000008436" description="Holo-[acyl-carrier-protein] synthase">
    <location>
        <begin position="1"/>
        <end position="122"/>
    </location>
</feature>
<feature type="binding site" evidence="1">
    <location>
        <position position="8"/>
    </location>
    <ligand>
        <name>Mg(2+)</name>
        <dbReference type="ChEBI" id="CHEBI:18420"/>
    </ligand>
</feature>
<feature type="binding site" evidence="1">
    <location>
        <position position="58"/>
    </location>
    <ligand>
        <name>Mg(2+)</name>
        <dbReference type="ChEBI" id="CHEBI:18420"/>
    </ligand>
</feature>